<evidence type="ECO:0000255" key="1">
    <source>
        <dbReference type="HAMAP-Rule" id="MF_00113"/>
    </source>
</evidence>
<comment type="function">
    <text evidence="1">Transfers and isomerizes the ribose moiety from AdoMet to the 7-aminomethyl group of 7-deazaguanine (preQ1-tRNA) to give epoxyqueuosine (oQ-tRNA).</text>
</comment>
<comment type="catalytic activity">
    <reaction evidence="1">
        <text>7-aminomethyl-7-carbaguanosine(34) in tRNA + S-adenosyl-L-methionine = epoxyqueuosine(34) in tRNA + adenine + L-methionine + 2 H(+)</text>
        <dbReference type="Rhea" id="RHEA:32155"/>
        <dbReference type="Rhea" id="RHEA-COMP:10342"/>
        <dbReference type="Rhea" id="RHEA-COMP:18582"/>
        <dbReference type="ChEBI" id="CHEBI:15378"/>
        <dbReference type="ChEBI" id="CHEBI:16708"/>
        <dbReference type="ChEBI" id="CHEBI:57844"/>
        <dbReference type="ChEBI" id="CHEBI:59789"/>
        <dbReference type="ChEBI" id="CHEBI:82833"/>
        <dbReference type="ChEBI" id="CHEBI:194443"/>
        <dbReference type="EC" id="2.4.99.17"/>
    </reaction>
</comment>
<comment type="pathway">
    <text evidence="1">tRNA modification; tRNA-queuosine biosynthesis.</text>
</comment>
<comment type="subunit">
    <text evidence="1">Monomer.</text>
</comment>
<comment type="subcellular location">
    <subcellularLocation>
        <location evidence="1">Cytoplasm</location>
    </subcellularLocation>
</comment>
<comment type="similarity">
    <text evidence="1">Belongs to the QueA family.</text>
</comment>
<accession>Q9A7Y2</accession>
<feature type="chain" id="PRO_0000165392" description="S-adenosylmethionine:tRNA ribosyltransferase-isomerase">
    <location>
        <begin position="1"/>
        <end position="366"/>
    </location>
</feature>
<keyword id="KW-0963">Cytoplasm</keyword>
<keyword id="KW-0671">Queuosine biosynthesis</keyword>
<keyword id="KW-1185">Reference proteome</keyword>
<keyword id="KW-0949">S-adenosyl-L-methionine</keyword>
<keyword id="KW-0808">Transferase</keyword>
<sequence length="366" mass="39817">MRLSDFDFDLPEDRIALRPAEPRDSARFLVVRPGQAVADHIVSDLPDFLRPGDALVFNDTRVIPARLSGLREGRTTGGADGTPVAVEATLHRRLAPDRWSAFMRPGKRLKVGDRVAFGGHEGRVGDLGRLDAVIAEKHDGGEVVLAFDLSGPDLDVGIAQHGDMPLPPYIAAKRGEDERDRADYQTVYAREDGSVAAPTAGLHFTPQLLERLKAKGVSLHFVTLHVGAGTFLPVKTDEVSEHRMHAEYGQVTQEIADALNAARAAGGRIVCVGTTSLRLLESATGEDGIVRPFADETAIFITPGYRFRTADVLMTNFHLPKSTLFMLVSAFAGTEAMRAAYEHAIATGYRFYSYGDSSLLFKDETC</sequence>
<proteinExistence type="inferred from homology"/>
<reference key="1">
    <citation type="journal article" date="2001" name="Proc. Natl. Acad. Sci. U.S.A.">
        <title>Complete genome sequence of Caulobacter crescentus.</title>
        <authorList>
            <person name="Nierman W.C."/>
            <person name="Feldblyum T.V."/>
            <person name="Laub M.T."/>
            <person name="Paulsen I.T."/>
            <person name="Nelson K.E."/>
            <person name="Eisen J.A."/>
            <person name="Heidelberg J.F."/>
            <person name="Alley M.R.K."/>
            <person name="Ohta N."/>
            <person name="Maddock J.R."/>
            <person name="Potocka I."/>
            <person name="Nelson W.C."/>
            <person name="Newton A."/>
            <person name="Stephens C."/>
            <person name="Phadke N.D."/>
            <person name="Ely B."/>
            <person name="DeBoy R.T."/>
            <person name="Dodson R.J."/>
            <person name="Durkin A.S."/>
            <person name="Gwinn M.L."/>
            <person name="Haft D.H."/>
            <person name="Kolonay J.F."/>
            <person name="Smit J."/>
            <person name="Craven M.B."/>
            <person name="Khouri H.M."/>
            <person name="Shetty J."/>
            <person name="Berry K.J."/>
            <person name="Utterback T.R."/>
            <person name="Tran K."/>
            <person name="Wolf A.M."/>
            <person name="Vamathevan J.J."/>
            <person name="Ermolaeva M.D."/>
            <person name="White O."/>
            <person name="Salzberg S.L."/>
            <person name="Venter J.C."/>
            <person name="Shapiro L."/>
            <person name="Fraser C.M."/>
        </authorList>
    </citation>
    <scope>NUCLEOTIDE SEQUENCE [LARGE SCALE GENOMIC DNA]</scope>
    <source>
        <strain>ATCC 19089 / CIP 103742 / CB 15</strain>
    </source>
</reference>
<name>QUEA_CAUVC</name>
<protein>
    <recommendedName>
        <fullName evidence="1">S-adenosylmethionine:tRNA ribosyltransferase-isomerase</fullName>
        <ecNumber evidence="1">2.4.99.17</ecNumber>
    </recommendedName>
    <alternativeName>
        <fullName evidence="1">Queuosine biosynthesis protein QueA</fullName>
    </alternativeName>
</protein>
<gene>
    <name evidence="1" type="primary">queA</name>
    <name type="ordered locus">CC_1587</name>
</gene>
<dbReference type="EC" id="2.4.99.17" evidence="1"/>
<dbReference type="EMBL" id="AE005673">
    <property type="protein sequence ID" value="AAK23566.1"/>
    <property type="molecule type" value="Genomic_DNA"/>
</dbReference>
<dbReference type="PIR" id="B87446">
    <property type="entry name" value="B87446"/>
</dbReference>
<dbReference type="RefSeq" id="NP_420398.1">
    <property type="nucleotide sequence ID" value="NC_002696.2"/>
</dbReference>
<dbReference type="RefSeq" id="WP_010919461.1">
    <property type="nucleotide sequence ID" value="NC_002696.2"/>
</dbReference>
<dbReference type="SMR" id="Q9A7Y2"/>
<dbReference type="STRING" id="190650.CC_1587"/>
<dbReference type="EnsemblBacteria" id="AAK23566">
    <property type="protein sequence ID" value="AAK23566"/>
    <property type="gene ID" value="CC_1587"/>
</dbReference>
<dbReference type="KEGG" id="ccr:CC_1587"/>
<dbReference type="PATRIC" id="fig|190650.5.peg.1615"/>
<dbReference type="eggNOG" id="COG0809">
    <property type="taxonomic scope" value="Bacteria"/>
</dbReference>
<dbReference type="HOGENOM" id="CLU_039110_1_1_5"/>
<dbReference type="BioCyc" id="CAULO:CC1587-MONOMER"/>
<dbReference type="UniPathway" id="UPA00392"/>
<dbReference type="Proteomes" id="UP000001816">
    <property type="component" value="Chromosome"/>
</dbReference>
<dbReference type="GO" id="GO:0005737">
    <property type="term" value="C:cytoplasm"/>
    <property type="evidence" value="ECO:0007669"/>
    <property type="project" value="UniProtKB-SubCell"/>
</dbReference>
<dbReference type="GO" id="GO:0051075">
    <property type="term" value="F:S-adenosylmethionine:tRNA ribosyltransferase-isomerase activity"/>
    <property type="evidence" value="ECO:0007669"/>
    <property type="project" value="UniProtKB-EC"/>
</dbReference>
<dbReference type="GO" id="GO:0008616">
    <property type="term" value="P:queuosine biosynthetic process"/>
    <property type="evidence" value="ECO:0007669"/>
    <property type="project" value="UniProtKB-UniRule"/>
</dbReference>
<dbReference type="GO" id="GO:0002099">
    <property type="term" value="P:tRNA wobble guanine modification"/>
    <property type="evidence" value="ECO:0007669"/>
    <property type="project" value="TreeGrafter"/>
</dbReference>
<dbReference type="FunFam" id="3.40.1780.10:FF:000001">
    <property type="entry name" value="S-adenosylmethionine:tRNA ribosyltransferase-isomerase"/>
    <property type="match status" value="1"/>
</dbReference>
<dbReference type="Gene3D" id="2.40.10.240">
    <property type="entry name" value="QueA-like"/>
    <property type="match status" value="1"/>
</dbReference>
<dbReference type="Gene3D" id="3.40.1780.10">
    <property type="entry name" value="QueA-like"/>
    <property type="match status" value="2"/>
</dbReference>
<dbReference type="HAMAP" id="MF_00113">
    <property type="entry name" value="QueA"/>
    <property type="match status" value="1"/>
</dbReference>
<dbReference type="InterPro" id="IPR003699">
    <property type="entry name" value="QueA"/>
</dbReference>
<dbReference type="InterPro" id="IPR042118">
    <property type="entry name" value="QueA_dom1"/>
</dbReference>
<dbReference type="InterPro" id="IPR042119">
    <property type="entry name" value="QueA_dom2"/>
</dbReference>
<dbReference type="InterPro" id="IPR036100">
    <property type="entry name" value="QueA_sf"/>
</dbReference>
<dbReference type="NCBIfam" id="NF001140">
    <property type="entry name" value="PRK00147.1"/>
    <property type="match status" value="1"/>
</dbReference>
<dbReference type="NCBIfam" id="TIGR00113">
    <property type="entry name" value="queA"/>
    <property type="match status" value="1"/>
</dbReference>
<dbReference type="PANTHER" id="PTHR30307">
    <property type="entry name" value="S-ADENOSYLMETHIONINE:TRNA RIBOSYLTRANSFERASE-ISOMERASE"/>
    <property type="match status" value="1"/>
</dbReference>
<dbReference type="PANTHER" id="PTHR30307:SF0">
    <property type="entry name" value="S-ADENOSYLMETHIONINE:TRNA RIBOSYLTRANSFERASE-ISOMERASE"/>
    <property type="match status" value="1"/>
</dbReference>
<dbReference type="Pfam" id="PF02547">
    <property type="entry name" value="Queuosine_synth"/>
    <property type="match status" value="1"/>
</dbReference>
<dbReference type="SUPFAM" id="SSF111337">
    <property type="entry name" value="QueA-like"/>
    <property type="match status" value="1"/>
</dbReference>
<organism>
    <name type="scientific">Caulobacter vibrioides (strain ATCC 19089 / CIP 103742 / CB 15)</name>
    <name type="common">Caulobacter crescentus</name>
    <dbReference type="NCBI Taxonomy" id="190650"/>
    <lineage>
        <taxon>Bacteria</taxon>
        <taxon>Pseudomonadati</taxon>
        <taxon>Pseudomonadota</taxon>
        <taxon>Alphaproteobacteria</taxon>
        <taxon>Caulobacterales</taxon>
        <taxon>Caulobacteraceae</taxon>
        <taxon>Caulobacter</taxon>
    </lineage>
</organism>